<keyword id="KW-0002">3D-structure</keyword>
<keyword id="KW-0025">Alternative splicing</keyword>
<keyword id="KW-1003">Cell membrane</keyword>
<keyword id="KW-1015">Disulfide bond</keyword>
<keyword id="KW-0325">Glycoprotein</keyword>
<keyword id="KW-0336">GPI-anchor</keyword>
<keyword id="KW-0449">Lipoprotein</keyword>
<keyword id="KW-0472">Membrane</keyword>
<keyword id="KW-1185">Reference proteome</keyword>
<keyword id="KW-0732">Signal</keyword>
<reference evidence="13" key="1">
    <citation type="journal article" date="2002" name="Proc. Natl. Acad. Sci. U.S.A.">
        <title>A family of MHC class I-like genes located in the vicinity of the mouse leukocyte receptor complex.</title>
        <authorList>
            <person name="Kasahara M."/>
            <person name="Watanabe Y."/>
            <person name="Sumasu M."/>
            <person name="Nagata T."/>
        </authorList>
    </citation>
    <scope>NUCLEOTIDE SEQUENCE [MRNA] (ISOFORMS 1 AND 2)</scope>
    <scope>TISSUE SPECIFICITY</scope>
    <source>
        <strain evidence="13">BALB/cJ</strain>
    </source>
</reference>
<reference evidence="14" key="2">
    <citation type="journal article" date="2009" name="PLoS Biol.">
        <title>Lineage-specific biology revealed by a finished genome assembly of the mouse.</title>
        <authorList>
            <person name="Church D.M."/>
            <person name="Goodstadt L."/>
            <person name="Hillier L.W."/>
            <person name="Zody M.C."/>
            <person name="Goldstein S."/>
            <person name="She X."/>
            <person name="Bult C.J."/>
            <person name="Agarwala R."/>
            <person name="Cherry J.L."/>
            <person name="DiCuccio M."/>
            <person name="Hlavina W."/>
            <person name="Kapustin Y."/>
            <person name="Meric P."/>
            <person name="Maglott D."/>
            <person name="Birtle Z."/>
            <person name="Marques A.C."/>
            <person name="Graves T."/>
            <person name="Zhou S."/>
            <person name="Teague B."/>
            <person name="Potamousis K."/>
            <person name="Churas C."/>
            <person name="Place M."/>
            <person name="Herschleb J."/>
            <person name="Runnheim R."/>
            <person name="Forrest D."/>
            <person name="Amos-Landgraf J."/>
            <person name="Schwartz D.C."/>
            <person name="Cheng Z."/>
            <person name="Lindblad-Toh K."/>
            <person name="Eichler E.E."/>
            <person name="Ponting C.P."/>
        </authorList>
    </citation>
    <scope>NUCLEOTIDE SEQUENCE [LARGE SCALE GENOMIC DNA]</scope>
    <source>
        <strain evidence="14">C57BL/6J</strain>
    </source>
</reference>
<reference evidence="12" key="3">
    <citation type="journal article" date="2004" name="Genome Res.">
        <title>The status, quality, and expansion of the NIH full-length cDNA project: the Mammalian Gene Collection (MGC).</title>
        <authorList>
            <consortium name="The MGC Project Team"/>
        </authorList>
    </citation>
    <scope>NUCLEOTIDE SEQUENCE [LARGE SCALE MRNA]</scope>
    <source>
        <tissue evidence="12">Brain</tissue>
    </source>
</reference>
<reference evidence="8" key="4">
    <citation type="journal article" date="2006" name="J. Immunol.">
        <title>MHC class I-like MILL molecules are beta2-microglobulin-associated, GPI-anchored glycoproteins that do not require TAP for cell surface expression.</title>
        <authorList>
            <person name="Kajikawa M."/>
            <person name="Baba T."/>
            <person name="Tomaru U."/>
            <person name="Watanabe Y."/>
            <person name="Koganei S."/>
            <person name="Tsuji-Kawahara S."/>
            <person name="Matsumoto N."/>
            <person name="Yamamoto K."/>
            <person name="Miyazawa M."/>
            <person name="Maenaka K."/>
            <person name="Ishizu A."/>
            <person name="Kasahara M."/>
        </authorList>
    </citation>
    <scope>SUBUNIT</scope>
    <scope>INTERACTION WITH B2M</scope>
    <scope>SUBCELLULAR LOCATION</scope>
    <scope>GLYCOSYLATION</scope>
    <scope>GPI-ANCHOR AT ASP-330</scope>
</reference>
<reference evidence="15" key="5">
    <citation type="journal article" date="2018" name="Nat. Commun.">
        <title>Structure of MHC class I-like MILL2 reveals heparan-sulfate binding and interdomain flexibility.</title>
        <authorList>
            <person name="Kajikawa M."/>
            <person name="Ose T."/>
            <person name="Fukunaga Y."/>
            <person name="Okabe Y."/>
            <person name="Matsumoto N."/>
            <person name="Yonezawa K."/>
            <person name="Shimizu N."/>
            <person name="Kollnberger S."/>
            <person name="Kasahara M."/>
            <person name="Maenaka K."/>
        </authorList>
    </citation>
    <scope>X-RAY CRYSTALLOGRAPHY (2.15 ANGSTROMS) OF 30-320 IN COMPLEX WITH B2M</scope>
    <scope>FUNCTION</scope>
    <scope>SUBUNIT</scope>
    <scope>DISULFIDE BONDS</scope>
    <scope>MUTAGENESIS OF 116-LYS--LYS-120; ARG-109; ARG-216; ARG-238; ARG-244; 273-LYS--ARG-276; ARG-291 AND ARG-295</scope>
</reference>
<proteinExistence type="evidence at protein level"/>
<name>MILL2_MOUSE</name>
<gene>
    <name evidence="7" type="primary">Mill2</name>
</gene>
<protein>
    <recommendedName>
        <fullName evidence="8">MHC class I-like protein MILL2</fullName>
    </recommendedName>
    <alternativeName>
        <fullName evidence="7">MHC class I-like located near the leukocyte receptor complex 2</fullName>
    </alternativeName>
</protein>
<feature type="signal peptide" evidence="1">
    <location>
        <begin position="1"/>
        <end position="29"/>
    </location>
</feature>
<feature type="chain" id="PRO_5015099155" description="MHC class I-like protein MILL2" evidence="10">
    <location>
        <begin position="30"/>
        <end position="330"/>
    </location>
</feature>
<feature type="propeptide" id="PRO_0000452207" description="Removed in mature form" evidence="10">
    <location>
        <begin position="331"/>
        <end position="355"/>
    </location>
</feature>
<feature type="domain" description="Ig-like C1-type" evidence="2">
    <location>
        <begin position="231"/>
        <end position="321"/>
    </location>
</feature>
<feature type="region of interest" description="Alpha-1" evidence="1">
    <location>
        <begin position="46"/>
        <end position="137"/>
    </location>
</feature>
<feature type="region of interest" description="Alpha-2" evidence="1">
    <location>
        <begin position="138"/>
        <end position="229"/>
    </location>
</feature>
<feature type="region of interest" description="Alpha-3" evidence="1">
    <location>
        <begin position="230"/>
        <end position="323"/>
    </location>
</feature>
<feature type="region of interest" description="Connecting peptide" evidence="1">
    <location>
        <begin position="324"/>
        <end position="329"/>
    </location>
</feature>
<feature type="lipid moiety-binding region" description="GPI-anchor amidated aspartate" evidence="10">
    <location>
        <position position="330"/>
    </location>
</feature>
<feature type="glycosylation site" description="N-linked (GlcNAc...) asparagine" evidence="1">
    <location>
        <position position="104"/>
    </location>
</feature>
<feature type="glycosylation site" description="N-linked (GlcNAc...) asparagine" evidence="1">
    <location>
        <position position="152"/>
    </location>
</feature>
<feature type="glycosylation site" description="N-linked (GlcNAc...) asparagine" evidence="1">
    <location>
        <position position="312"/>
    </location>
</feature>
<feature type="disulfide bond" evidence="6 15">
    <location>
        <begin position="96"/>
        <end position="107"/>
    </location>
</feature>
<feature type="disulfide bond" evidence="6 15">
    <location>
        <begin position="147"/>
        <end position="210"/>
    </location>
</feature>
<feature type="disulfide bond" evidence="6 15">
    <location>
        <begin position="249"/>
        <end position="306"/>
    </location>
</feature>
<feature type="splice variant" id="VSP_060927" description="In isoform 2." evidence="8">
    <location>
        <begin position="35"/>
        <end position="49"/>
    </location>
</feature>
<feature type="mutagenesis site" description="No effect on binding to NIH-3T3 fibroblast cells; when associated with A-216." evidence="6">
    <original>R</original>
    <variation>A</variation>
    <location>
        <position position="109"/>
    </location>
</feature>
<feature type="mutagenesis site" description="No effect on binding to NIH-3T3 fibroblast cells." evidence="6">
    <original>KVEEK</original>
    <variation>AVEEA</variation>
    <location>
        <begin position="116"/>
        <end position="120"/>
    </location>
</feature>
<feature type="mutagenesis site" description="No effect on binding to NIH-3T3 fibroblast cells; when associated with A-109." evidence="6">
    <original>R</original>
    <variation>A</variation>
    <location>
        <position position="216"/>
    </location>
</feature>
<feature type="mutagenesis site" description="Fails to bind to heparan sulfate or to NIH-3T3 fibroblast cells; when associated with A-244 and A-295." evidence="6">
    <original>R</original>
    <variation>A</variation>
    <location>
        <position position="238"/>
    </location>
</feature>
<feature type="mutagenesis site" description="Fails to bind to heparan sulfate or to NIH-3T3 fibroblast cells; when associated with A-238 and A-295." evidence="6">
    <original>R</original>
    <variation>A</variation>
    <location>
        <position position="244"/>
    </location>
</feature>
<feature type="mutagenesis site" description="Fails to bind to NIH-3T3 fibroblast cells; when associated with A-291." evidence="6">
    <original>KTFR</original>
    <variation>ATFA</variation>
    <location>
        <begin position="273"/>
        <end position="276"/>
    </location>
</feature>
<feature type="mutagenesis site" description="Fails to bind to NIH-3T3 fibroblast cells; when associated with 273-A--A-276." evidence="6">
    <original>R</original>
    <variation>A</variation>
    <location>
        <position position="291"/>
    </location>
</feature>
<feature type="mutagenesis site" description="Fails to bind to heparan sulfate or to NIH-3T3 fibroblast cells; when associated with A-238 and A-244." evidence="6">
    <original>R</original>
    <variation>A</variation>
    <location>
        <position position="295"/>
    </location>
</feature>
<feature type="strand" evidence="16">
    <location>
        <begin position="51"/>
        <end position="61"/>
    </location>
</feature>
<feature type="turn" evidence="16">
    <location>
        <begin position="65"/>
        <end position="67"/>
    </location>
</feature>
<feature type="strand" evidence="16">
    <location>
        <begin position="70"/>
        <end position="76"/>
    </location>
</feature>
<feature type="strand" evidence="16">
    <location>
        <begin position="79"/>
        <end position="85"/>
    </location>
</feature>
<feature type="strand" evidence="16">
    <location>
        <begin position="94"/>
        <end position="96"/>
    </location>
</feature>
<feature type="helix" evidence="16">
    <location>
        <begin position="103"/>
        <end position="124"/>
    </location>
</feature>
<feature type="helix" evidence="16">
    <location>
        <begin position="126"/>
        <end position="132"/>
    </location>
</feature>
<feature type="strand" evidence="16">
    <location>
        <begin position="135"/>
        <end position="137"/>
    </location>
</feature>
<feature type="strand" evidence="16">
    <location>
        <begin position="141"/>
        <end position="149"/>
    </location>
</feature>
<feature type="strand" evidence="16">
    <location>
        <begin position="155"/>
        <end position="163"/>
    </location>
</feature>
<feature type="strand" evidence="16">
    <location>
        <begin position="166"/>
        <end position="172"/>
    </location>
</feature>
<feature type="turn" evidence="16">
    <location>
        <begin position="173"/>
        <end position="176"/>
    </location>
</feature>
<feature type="strand" evidence="16">
    <location>
        <begin position="177"/>
        <end position="180"/>
    </location>
</feature>
<feature type="helix" evidence="16">
    <location>
        <begin position="186"/>
        <end position="195"/>
    </location>
</feature>
<feature type="helix" evidence="16">
    <location>
        <begin position="199"/>
        <end position="207"/>
    </location>
</feature>
<feature type="helix" evidence="16">
    <location>
        <begin position="209"/>
        <end position="221"/>
    </location>
</feature>
<feature type="strand" evidence="16">
    <location>
        <begin position="232"/>
        <end position="238"/>
    </location>
</feature>
<feature type="strand" evidence="16">
    <location>
        <begin position="245"/>
        <end position="257"/>
    </location>
</feature>
<feature type="strand" evidence="16">
    <location>
        <begin position="259"/>
        <end position="265"/>
    </location>
</feature>
<feature type="strand" evidence="16">
    <location>
        <begin position="268"/>
        <end position="275"/>
    </location>
</feature>
<feature type="turn" evidence="16">
    <location>
        <begin position="277"/>
        <end position="279"/>
    </location>
</feature>
<feature type="strand" evidence="16">
    <location>
        <begin position="280"/>
        <end position="282"/>
    </location>
</feature>
<feature type="strand" evidence="16">
    <location>
        <begin position="284"/>
        <end position="286"/>
    </location>
</feature>
<feature type="strand" evidence="16">
    <location>
        <begin position="288"/>
        <end position="296"/>
    </location>
</feature>
<feature type="helix" evidence="16">
    <location>
        <begin position="301"/>
        <end position="303"/>
    </location>
</feature>
<feature type="strand" evidence="16">
    <location>
        <begin position="304"/>
        <end position="310"/>
    </location>
</feature>
<feature type="strand" evidence="16">
    <location>
        <begin position="313"/>
        <end position="318"/>
    </location>
</feature>
<organism evidence="14">
    <name type="scientific">Mus musculus</name>
    <name type="common">Mouse</name>
    <dbReference type="NCBI Taxonomy" id="10090"/>
    <lineage>
        <taxon>Eukaryota</taxon>
        <taxon>Metazoa</taxon>
        <taxon>Chordata</taxon>
        <taxon>Craniata</taxon>
        <taxon>Vertebrata</taxon>
        <taxon>Euteleostomi</taxon>
        <taxon>Mammalia</taxon>
        <taxon>Eutheria</taxon>
        <taxon>Euarchontoglires</taxon>
        <taxon>Glires</taxon>
        <taxon>Rodentia</taxon>
        <taxon>Myomorpha</taxon>
        <taxon>Muroidea</taxon>
        <taxon>Muridae</taxon>
        <taxon>Murinae</taxon>
        <taxon>Mus</taxon>
        <taxon>Mus</taxon>
    </lineage>
</organism>
<accession>Q8HWE5</accession>
<accession>Q8HWE6</accession>
<sequence length="355" mass="39224">MKASSGKPREFRPAVLLLILGLLLRDSRGSSIQGFLADVEVHGSSRLTRTHTLRYNVRAHSLEGSEKTQLLVLIYVDEELFLKYNGDSRETEPLGCWIKGHGGNETCARETNNLLKVEEKLRGMMAEVINQKSQEEGLHTLQATLGCELLSNGSTRGFWHLGYDGQNFLTFDQKTLTWTVDGPSTQQNKMFWKTHAPRADLVKTFLDDICPAHLQRYLASLRNGLQDTGPPMVTVTCRNYPVGRVTLTCRAFNLYTREATLVWLQDGKPVQQKTFRSETILPSGDGTYQARVSIRVLPGQEPQFSCNLRHGNHSIMQTAVSGHAAEDSQDVASSATASAGSALPVVLAVALARAN</sequence>
<evidence type="ECO:0000255" key="1"/>
<evidence type="ECO:0000255" key="2">
    <source>
        <dbReference type="PROSITE-ProRule" id="PRU00114"/>
    </source>
</evidence>
<evidence type="ECO:0000255" key="3">
    <source>
        <dbReference type="RuleBase" id="RU004439"/>
    </source>
</evidence>
<evidence type="ECO:0000269" key="4">
    <source>
    </source>
</evidence>
<evidence type="ECO:0000269" key="5">
    <source>
    </source>
</evidence>
<evidence type="ECO:0000269" key="6">
    <source>
    </source>
</evidence>
<evidence type="ECO:0000303" key="7">
    <source>
    </source>
</evidence>
<evidence type="ECO:0000305" key="8"/>
<evidence type="ECO:0000305" key="9">
    <source>
    </source>
</evidence>
<evidence type="ECO:0000305" key="10">
    <source>
    </source>
</evidence>
<evidence type="ECO:0000305" key="11">
    <source>
    </source>
</evidence>
<evidence type="ECO:0000312" key="12">
    <source>
        <dbReference type="EMBL" id="AAI44887.1"/>
    </source>
</evidence>
<evidence type="ECO:0000312" key="13">
    <source>
        <dbReference type="EMBL" id="BAC21671.1"/>
    </source>
</evidence>
<evidence type="ECO:0000312" key="14">
    <source>
        <dbReference type="Proteomes" id="UP000000589"/>
    </source>
</evidence>
<evidence type="ECO:0007744" key="15">
    <source>
        <dbReference type="PDB" id="6A97"/>
    </source>
</evidence>
<evidence type="ECO:0007829" key="16">
    <source>
        <dbReference type="PDB" id="6A97"/>
    </source>
</evidence>
<dbReference type="EMBL" id="AB086266">
    <property type="protein sequence ID" value="BAC21670.1"/>
    <property type="molecule type" value="mRNA"/>
</dbReference>
<dbReference type="EMBL" id="AB086267">
    <property type="protein sequence ID" value="BAC21671.1"/>
    <property type="molecule type" value="mRNA"/>
</dbReference>
<dbReference type="EMBL" id="AC153651">
    <property type="status" value="NOT_ANNOTATED_CDS"/>
    <property type="molecule type" value="Genomic_DNA"/>
</dbReference>
<dbReference type="EMBL" id="BC137748">
    <property type="protein sequence ID" value="AAI37749.1"/>
    <property type="molecule type" value="mRNA"/>
</dbReference>
<dbReference type="EMBL" id="BC144886">
    <property type="protein sequence ID" value="AAI44887.1"/>
    <property type="molecule type" value="mRNA"/>
</dbReference>
<dbReference type="CCDS" id="CCDS20879.1">
    <molecule id="Q8HWE5-2"/>
</dbReference>
<dbReference type="CCDS" id="CCDS20880.1">
    <molecule id="Q8HWE5-1"/>
</dbReference>
<dbReference type="RefSeq" id="NP_715641.1">
    <molecule id="Q8HWE5-2"/>
    <property type="nucleotide sequence ID" value="NM_153760.2"/>
</dbReference>
<dbReference type="RefSeq" id="NP_715642.2">
    <molecule id="Q8HWE5-1"/>
    <property type="nucleotide sequence ID" value="NM_153761.3"/>
</dbReference>
<dbReference type="RefSeq" id="XP_006539995.1">
    <molecule id="Q8HWE5-1"/>
    <property type="nucleotide sequence ID" value="XM_006539932.3"/>
</dbReference>
<dbReference type="RefSeq" id="XP_006539996.1">
    <molecule id="Q8HWE5-2"/>
    <property type="nucleotide sequence ID" value="XM_006539933.4"/>
</dbReference>
<dbReference type="RefSeq" id="XP_017177723.1">
    <molecule id="Q8HWE5-1"/>
    <property type="nucleotide sequence ID" value="XM_017322234.1"/>
</dbReference>
<dbReference type="RefSeq" id="XP_030098419.1">
    <molecule id="Q8HWE5-2"/>
    <property type="nucleotide sequence ID" value="XM_030242559.1"/>
</dbReference>
<dbReference type="PDB" id="6A97">
    <property type="method" value="X-ray"/>
    <property type="resolution" value="2.15 A"/>
    <property type="chains" value="A/C=30-320"/>
</dbReference>
<dbReference type="PDBsum" id="6A97"/>
<dbReference type="SMR" id="Q8HWE5"/>
<dbReference type="FunCoup" id="Q8HWE5">
    <property type="interactions" value="8"/>
</dbReference>
<dbReference type="STRING" id="10090.ENSMUSP00000154268"/>
<dbReference type="GlyCosmos" id="Q8HWE5">
    <property type="glycosylation" value="3 sites, No reported glycans"/>
</dbReference>
<dbReference type="GlyGen" id="Q8HWE5">
    <property type="glycosylation" value="3 sites, 1 N-linked glycan (2 sites)"/>
</dbReference>
<dbReference type="PhosphoSitePlus" id="Q8HWE5"/>
<dbReference type="PaxDb" id="10090-ENSMUSP00000072223"/>
<dbReference type="ProteomicsDB" id="330471"/>
<dbReference type="ProteomicsDB" id="331214"/>
<dbReference type="DNASU" id="243864"/>
<dbReference type="Ensembl" id="ENSMUST00000072386.11">
    <molecule id="Q8HWE5-1"/>
    <property type="protein sequence ID" value="ENSMUSP00000072223.5"/>
    <property type="gene ID" value="ENSMUSG00000040987.16"/>
</dbReference>
<dbReference type="Ensembl" id="ENSMUST00000072415.9">
    <molecule id="Q8HWE5-2"/>
    <property type="protein sequence ID" value="ENSMUSP00000072246.7"/>
    <property type="gene ID" value="ENSMUSG00000040987.16"/>
</dbReference>
<dbReference type="Ensembl" id="ENSMUST00000227379.2">
    <molecule id="Q8HWE5-2"/>
    <property type="protein sequence ID" value="ENSMUSP00000154222.2"/>
    <property type="gene ID" value="ENSMUSG00000040987.16"/>
</dbReference>
<dbReference type="Ensembl" id="ENSMUST00000228493.2">
    <molecule id="Q8HWE5-1"/>
    <property type="protein sequence ID" value="ENSMUSP00000154268.2"/>
    <property type="gene ID" value="ENSMUSG00000040987.16"/>
</dbReference>
<dbReference type="GeneID" id="243864"/>
<dbReference type="KEGG" id="mmu:243864"/>
<dbReference type="UCSC" id="uc009fjt.1">
    <molecule id="Q8HWE5-1"/>
    <property type="organism name" value="mouse"/>
</dbReference>
<dbReference type="UCSC" id="uc009fju.1">
    <property type="organism name" value="mouse"/>
</dbReference>
<dbReference type="AGR" id="MGI:2179989"/>
<dbReference type="CTD" id="243864"/>
<dbReference type="MGI" id="MGI:2179989">
    <property type="gene designation" value="Mill2"/>
</dbReference>
<dbReference type="VEuPathDB" id="HostDB:ENSMUSG00000040987"/>
<dbReference type="eggNOG" id="ENOG502RU00">
    <property type="taxonomic scope" value="Eukaryota"/>
</dbReference>
<dbReference type="GeneTree" id="ENSGT01130000278293"/>
<dbReference type="HOGENOM" id="CLU_047501_4_0_1"/>
<dbReference type="InParanoid" id="Q8HWE5"/>
<dbReference type="OMA" id="HQGTFGP"/>
<dbReference type="OrthoDB" id="9449998at2759"/>
<dbReference type="PhylomeDB" id="Q8HWE5"/>
<dbReference type="TreeFam" id="TF339076"/>
<dbReference type="BioGRID-ORCS" id="243864">
    <property type="hits" value="0 hits in 77 CRISPR screens"/>
</dbReference>
<dbReference type="PRO" id="PR:Q8HWE5"/>
<dbReference type="Proteomes" id="UP000000589">
    <property type="component" value="Chromosome 7"/>
</dbReference>
<dbReference type="RNAct" id="Q8HWE5">
    <property type="molecule type" value="protein"/>
</dbReference>
<dbReference type="Bgee" id="ENSMUSG00000040987">
    <property type="expression patterns" value="Expressed in urinary bladder and 49 other cell types or tissues"/>
</dbReference>
<dbReference type="ExpressionAtlas" id="Q8HWE5">
    <property type="expression patterns" value="baseline and differential"/>
</dbReference>
<dbReference type="GO" id="GO:0009897">
    <property type="term" value="C:external side of plasma membrane"/>
    <property type="evidence" value="ECO:0000314"/>
    <property type="project" value="MGI"/>
</dbReference>
<dbReference type="FunFam" id="3.30.500.10:FF:000003">
    <property type="entry name" value="IgG receptor FcRn large subunit p51"/>
    <property type="match status" value="1"/>
</dbReference>
<dbReference type="FunFam" id="2.60.40.10:FF:000204">
    <property type="entry name" value="Major histocompatibility complex, class I-related protein"/>
    <property type="match status" value="1"/>
</dbReference>
<dbReference type="Gene3D" id="2.60.40.10">
    <property type="entry name" value="Immunoglobulins"/>
    <property type="match status" value="1"/>
</dbReference>
<dbReference type="Gene3D" id="3.30.500.10">
    <property type="entry name" value="MHC class I-like antigen recognition-like"/>
    <property type="match status" value="1"/>
</dbReference>
<dbReference type="InterPro" id="IPR007110">
    <property type="entry name" value="Ig-like_dom"/>
</dbReference>
<dbReference type="InterPro" id="IPR036179">
    <property type="entry name" value="Ig-like_dom_sf"/>
</dbReference>
<dbReference type="InterPro" id="IPR013783">
    <property type="entry name" value="Ig-like_fold"/>
</dbReference>
<dbReference type="InterPro" id="IPR003597">
    <property type="entry name" value="Ig_C1-set"/>
</dbReference>
<dbReference type="InterPro" id="IPR050208">
    <property type="entry name" value="MHC_class-I_related"/>
</dbReference>
<dbReference type="InterPro" id="IPR011161">
    <property type="entry name" value="MHC_I-like_Ag-recog"/>
</dbReference>
<dbReference type="InterPro" id="IPR037055">
    <property type="entry name" value="MHC_I-like_Ag-recog_sf"/>
</dbReference>
<dbReference type="InterPro" id="IPR011162">
    <property type="entry name" value="MHC_I/II-like_Ag-recog"/>
</dbReference>
<dbReference type="InterPro" id="IPR001039">
    <property type="entry name" value="MHC_I_a_a1/a2"/>
</dbReference>
<dbReference type="PANTHER" id="PTHR16675:SF190">
    <property type="entry name" value="MHC CLASS I-LIKE PROTEIN MILL2"/>
    <property type="match status" value="1"/>
</dbReference>
<dbReference type="PANTHER" id="PTHR16675">
    <property type="entry name" value="MHC CLASS I-RELATED"/>
    <property type="match status" value="1"/>
</dbReference>
<dbReference type="Pfam" id="PF07654">
    <property type="entry name" value="C1-set"/>
    <property type="match status" value="1"/>
</dbReference>
<dbReference type="Pfam" id="PF00129">
    <property type="entry name" value="MHC_I"/>
    <property type="match status" value="1"/>
</dbReference>
<dbReference type="PRINTS" id="PR01638">
    <property type="entry name" value="MHCCLASSI"/>
</dbReference>
<dbReference type="SMART" id="SM00407">
    <property type="entry name" value="IGc1"/>
    <property type="match status" value="1"/>
</dbReference>
<dbReference type="SUPFAM" id="SSF48726">
    <property type="entry name" value="Immunoglobulin"/>
    <property type="match status" value="1"/>
</dbReference>
<dbReference type="SUPFAM" id="SSF54452">
    <property type="entry name" value="MHC antigen-recognition domain"/>
    <property type="match status" value="1"/>
</dbReference>
<dbReference type="PROSITE" id="PS50835">
    <property type="entry name" value="IG_LIKE"/>
    <property type="match status" value="1"/>
</dbReference>
<comment type="function">
    <text evidence="6">Binds to heparan sulfate proteoglycans on the surface of fibroblast (NIH-3T3) cells.</text>
</comment>
<comment type="subunit">
    <text evidence="5 6">Heterodimer with B2M (beta-2-microglobulin).</text>
</comment>
<comment type="subcellular location">
    <subcellularLocation>
        <location evidence="5">Cell membrane</location>
        <topology evidence="5">Lipid-anchor</topology>
        <topology evidence="5">GPI-anchor</topology>
    </subcellularLocation>
</comment>
<comment type="alternative products">
    <event type="alternative splicing"/>
    <isoform>
        <id>Q8HWE5-1</id>
        <name>1</name>
        <name evidence="7">Long</name>
        <sequence type="displayed"/>
    </isoform>
    <isoform>
        <id>Q8HWE5-2</id>
        <name>2</name>
        <name evidence="7">Short</name>
        <sequence type="described" ref="VSP_060927"/>
    </isoform>
</comment>
<comment type="tissue specificity">
    <text evidence="4">Ubiquitously expressed in neonatal and adult tissues.</text>
</comment>
<comment type="PTM">
    <text evidence="5">N-glycosylated.</text>
</comment>
<comment type="similarity">
    <text evidence="3">Belongs to the MHC class I family.</text>
</comment>
<comment type="caution">
    <text evidence="9 10 11">Lacks key residues involved in peptide docking and also does not require TAP (transporter involved in antigen processing) for cell surface expression, suggesting that this is a non-classical MHC class I protein which does not play a role in antigen presentation.</text>
</comment>